<name>ICEA_PANAN</name>
<proteinExistence type="inferred from homology"/>
<feature type="chain" id="PRO_0000204021" description="Ice nucleation protein InaA">
    <location>
        <begin position="1"/>
        <end position="1322"/>
    </location>
</feature>
<feature type="region of interest" description="Octapeptide periodicity">
    <location>
        <begin position="162"/>
        <end position="1281"/>
    </location>
</feature>
<feature type="region of interest" description="Disordered" evidence="2">
    <location>
        <begin position="271"/>
        <end position="303"/>
    </location>
</feature>
<feature type="region of interest" description="Disordered" evidence="2">
    <location>
        <begin position="327"/>
        <end position="358"/>
    </location>
</feature>
<feature type="region of interest" description="Disordered" evidence="2">
    <location>
        <begin position="372"/>
        <end position="399"/>
    </location>
</feature>
<feature type="region of interest" description="Disordered" evidence="2">
    <location>
        <begin position="423"/>
        <end position="448"/>
    </location>
</feature>
<feature type="compositionally biased region" description="Polar residues" evidence="2">
    <location>
        <begin position="271"/>
        <end position="302"/>
    </location>
</feature>
<feature type="compositionally biased region" description="Polar residues" evidence="2">
    <location>
        <begin position="327"/>
        <end position="350"/>
    </location>
</feature>
<feature type="compositionally biased region" description="Polar residues" evidence="2">
    <location>
        <begin position="373"/>
        <end position="398"/>
    </location>
</feature>
<feature type="compositionally biased region" description="Polar residues" evidence="2">
    <location>
        <begin position="423"/>
        <end position="446"/>
    </location>
</feature>
<protein>
    <recommendedName>
        <fullName>Ice nucleation protein InaA</fullName>
    </recommendedName>
</protein>
<evidence type="ECO:0000250" key="1"/>
<evidence type="ECO:0000256" key="2">
    <source>
        <dbReference type="SAM" id="MobiDB-lite"/>
    </source>
</evidence>
<evidence type="ECO:0000305" key="3"/>
<gene>
    <name type="primary">inaA</name>
</gene>
<keyword id="KW-0998">Cell outer membrane</keyword>
<keyword id="KW-0387">Ice nucleation</keyword>
<keyword id="KW-0472">Membrane</keyword>
<keyword id="KW-0677">Repeat</keyword>
<reference key="1">
    <citation type="journal article" date="1989" name="FEBS Lett.">
        <title>An ice nucleation active gene of Erwinia ananas. Sequence similarity to those of Pseudomonas species and regions required for ice nucleation activity.</title>
        <authorList>
            <person name="Abe K."/>
            <person name="Watabe S."/>
            <person name="Emori Y."/>
            <person name="Watanabe M."/>
            <person name="Arai S."/>
        </authorList>
    </citation>
    <scope>NUCLEOTIDE SEQUENCE [GENOMIC DNA]</scope>
</reference>
<comment type="function">
    <text>Ice nucleation proteins enable bacteria to nucleate crystallization in supercooled water.</text>
</comment>
<comment type="subcellular location">
    <subcellularLocation>
        <location evidence="1">Cell outer membrane</location>
        <topology evidence="1">Peripheral membrane protein</topology>
    </subcellularLocation>
</comment>
<comment type="domain">
    <text>Contains many imperfect repeats of a consensus octapeptide A-G-Y-G-S-T-X-T; further on a 16-residue and a regional 48-residue periodicity is superimposed.</text>
</comment>
<comment type="similarity">
    <text evidence="3">Belongs to the bacterial ice nucleation protein family.</text>
</comment>
<organism>
    <name type="scientific">Pantoea ananas</name>
    <name type="common">Erwinia uredovora</name>
    <dbReference type="NCBI Taxonomy" id="553"/>
    <lineage>
        <taxon>Bacteria</taxon>
        <taxon>Pseudomonadati</taxon>
        <taxon>Pseudomonadota</taxon>
        <taxon>Gammaproteobacteria</taxon>
        <taxon>Enterobacterales</taxon>
        <taxon>Erwiniaceae</taxon>
        <taxon>Pantoea</taxon>
    </lineage>
</organism>
<sequence>MKEDKVLILRTCANNMADHGGIIWPLSGIVECKYWKPVKGFENGLTGLIWGKGSDSPLSLHADARRVVAEVAADECIAIETHGWIKFPRAEVLHVGTQNSAMQFILHHRADYVACTEMQAGPGGPDVTSEAKAGNRSLPVTDDIDATIESGSTQPTQTIEIATYGSTLSGTHQSQLIAGYGSTETAGDSSTLIAGYGSTGTAGSDSTLVAGYGSTQTAGEESSQMAGYGSTQTGMKGSDLTAGYGSTGTAGADSSLIAGYGSTQTAGEDNSLTAGYGSTQTAGEDSSLTAGYGSTQTAQKGSDLTAGYGSTGTAGADSSLIAGYGSTQTAGEESTQTAGYGSTQTAQKGSDLTAGYGSTGTAGDDSSLIAGYGSTQTAGEDSSLTAGYGSTQTAQKGSDLTAGYGSTGTSGADSSLIAGYGSTQTAGEESTQTAGYGSTQTAQKGSDLTAGYGSTGTAGDDSSLIAGYGSTQTAQKGSDLTAGYGSTSTAGYESSLIAGYGSTQTAGYGSTLTAGYGSTQTAQNESDLITGYGSTSTAGANSSLIAGYGSTQTASYNSVLTAGYGSTQTAREGSDLTAGYGSTGTAGSDSSIIAGYGSTSTAGADSSLIAGYGSTQTAGYNSILTAGYGSTQTAEEGSDLTAGYGSTSTAGADSSLIAGYGSTQTAGYNSILTAGYGSTQTAQEGSDLTAGYGSTSTAGADSSLIAGYGSTQTASYHSSLTAGYGSTQTAQEQSVLTTGYGSTSTAGADSSLIAGYGSTQTAGYNSILTAGYGSTQTAQERSDLTTGYGSTSTAGADSSLIAGYGSTQTAGYHSILTAGYGSTQTAQERSDLTTGYGSTSTAGADSSLIAGYGSTQTAGYNSILTAGYGSTQTAQENSDLTTGYGSTSTAGYDSSLIAGYGSTQTAGYHSILTAGYGSTQTARTRSDLTTGYGSTSTAGPDSSLIAGYGSTQTAGYNSILTAGYGSTQTGQENSDLTTGYGSTSTAGYESSLIAGYGSTQTASFKSTLMAGYGSSQTAREQSSLTAGYGSTSMAGYDSSLIAGYGSTQTAGYQSTLTAGYGSTQTAEHSSTLTAGYGSTATAGADSSLIAGYGSSLTSGIRSFLTAGYGSTLISGLRSVLTAGYGSSLISGRRSSLTAGYGSNQIASHRSSLIAGPESTQITGNRSMLIAGKGSSQTAGYRSTLISGADSVQMAGERGKLIAGADSTQTAGDRSKLLAGNNSYLTAGDRSKLTAGNDCILMAGDRSKLTAGINSILTAGCRSKLIGSNGSTLTAGENSVLIFRCWDGKRYTNVVAKTGKGGIEADMPYQMDEDNNIVNKPEE</sequence>
<dbReference type="EMBL" id="X17316">
    <property type="protein sequence ID" value="CAA35194.1"/>
    <property type="molecule type" value="Genomic_DNA"/>
</dbReference>
<dbReference type="PIR" id="S07053">
    <property type="entry name" value="S07053"/>
</dbReference>
<dbReference type="GO" id="GO:0009279">
    <property type="term" value="C:cell outer membrane"/>
    <property type="evidence" value="ECO:0007669"/>
    <property type="project" value="UniProtKB-SubCell"/>
</dbReference>
<dbReference type="GO" id="GO:0050825">
    <property type="term" value="F:ice binding"/>
    <property type="evidence" value="ECO:0007669"/>
    <property type="project" value="UniProtKB-KW"/>
</dbReference>
<dbReference type="InterPro" id="IPR000258">
    <property type="entry name" value="Ice_nucleatn"/>
</dbReference>
<dbReference type="PANTHER" id="PTHR31294">
    <property type="match status" value="1"/>
</dbReference>
<dbReference type="PANTHER" id="PTHR31294:SF8">
    <property type="entry name" value="KERATIN-ASSOCIATED PROTEIN 21-1-RELATED"/>
    <property type="match status" value="1"/>
</dbReference>
<dbReference type="Pfam" id="PF00818">
    <property type="entry name" value="Ice_nucleation"/>
    <property type="match status" value="40"/>
</dbReference>
<dbReference type="PRINTS" id="PR00327">
    <property type="entry name" value="ICENUCLEATN"/>
</dbReference>
<dbReference type="SUPFAM" id="SSF69349">
    <property type="entry name" value="Phage fibre proteins"/>
    <property type="match status" value="9"/>
</dbReference>
<dbReference type="PROSITE" id="PS00314">
    <property type="entry name" value="ICE_NUCLEATION"/>
    <property type="match status" value="49"/>
</dbReference>
<accession>P20469</accession>